<protein>
    <recommendedName>
        <fullName>Putative amidase AmiB2</fullName>
        <ecNumber>3.5.1.4</ecNumber>
    </recommendedName>
</protein>
<proteinExistence type="inferred from homology"/>
<dbReference type="EC" id="3.5.1.4"/>
<dbReference type="EMBL" id="AE000516">
    <property type="protein sequence ID" value="AAK45560.1"/>
    <property type="molecule type" value="Genomic_DNA"/>
</dbReference>
<dbReference type="PIR" id="G70753">
    <property type="entry name" value="G70753"/>
</dbReference>
<dbReference type="RefSeq" id="WP_003406369.1">
    <property type="nucleotide sequence ID" value="NZ_KK341227.1"/>
</dbReference>
<dbReference type="SMR" id="P9WQ96"/>
<dbReference type="KEGG" id="mtc:MT1301"/>
<dbReference type="PATRIC" id="fig|83331.31.peg.1405"/>
<dbReference type="HOGENOM" id="CLU_009600_0_4_11"/>
<dbReference type="Proteomes" id="UP000001020">
    <property type="component" value="Chromosome"/>
</dbReference>
<dbReference type="GO" id="GO:0004040">
    <property type="term" value="F:amidase activity"/>
    <property type="evidence" value="ECO:0007669"/>
    <property type="project" value="UniProtKB-EC"/>
</dbReference>
<dbReference type="Gene3D" id="3.90.1300.10">
    <property type="entry name" value="Amidase signature (AS) domain"/>
    <property type="match status" value="1"/>
</dbReference>
<dbReference type="InterPro" id="IPR000120">
    <property type="entry name" value="Amidase"/>
</dbReference>
<dbReference type="InterPro" id="IPR020556">
    <property type="entry name" value="Amidase_CS"/>
</dbReference>
<dbReference type="InterPro" id="IPR023631">
    <property type="entry name" value="Amidase_dom"/>
</dbReference>
<dbReference type="InterPro" id="IPR036928">
    <property type="entry name" value="AS_sf"/>
</dbReference>
<dbReference type="NCBIfam" id="NF009119">
    <property type="entry name" value="PRK12470.1"/>
    <property type="match status" value="1"/>
</dbReference>
<dbReference type="PANTHER" id="PTHR11895:SF7">
    <property type="entry name" value="GLUTAMYL-TRNA(GLN) AMIDOTRANSFERASE SUBUNIT A, MITOCHONDRIAL"/>
    <property type="match status" value="1"/>
</dbReference>
<dbReference type="PANTHER" id="PTHR11895">
    <property type="entry name" value="TRANSAMIDASE"/>
    <property type="match status" value="1"/>
</dbReference>
<dbReference type="Pfam" id="PF01425">
    <property type="entry name" value="Amidase"/>
    <property type="match status" value="1"/>
</dbReference>
<dbReference type="SUPFAM" id="SSF75304">
    <property type="entry name" value="Amidase signature (AS) enzymes"/>
    <property type="match status" value="1"/>
</dbReference>
<dbReference type="PROSITE" id="PS00571">
    <property type="entry name" value="AMIDASES"/>
    <property type="match status" value="1"/>
</dbReference>
<evidence type="ECO:0000250" key="1"/>
<evidence type="ECO:0000305" key="2"/>
<gene>
    <name type="primary">amiB2</name>
    <name type="ordered locus">MT1301</name>
</gene>
<sequence length="462" mass="49081">MDPTDLAFAGAAAQARMLADGALTAPMLLEVYLQRIERLDSHLRAYRVVQFDRARAEAEAAQQRLDAGERLPLLGVPIAIKDDVDIAGEVTTYGSAGHGPAATSDAEVVRRLRAAGAVIIGKTNVPELMIMPFTESLAFGATRNPWCLNRTPGGSSGGSAAAVAAGLAPVALGSDGGGSIRIPCTWCGLFGLKPQRDRISLEPHDGAWQGLSVNGPIARSVMDAALLLDATTTVPGPEGEFVAAAARQPGRLRIALSTRVPTPLPVRCGKQELAAVHQAGALLRDLGHDVVVRDPDYPASTYANYLPRFFRGISDDADAQAHPDRLEARTRAIARLGSFFSDRRMAALRAAEVVLSSRIQSIFDDVDVVVTPGAATGPSRIGAYQRRGAVSTLLLVVQRVPYFQVWNLTGQPAAVVPWDFDGDGLPMSVQLVGRPYDEATLLALAAQIESARPWAHRRPSVS</sequence>
<feature type="chain" id="PRO_0000426814" description="Putative amidase AmiB2">
    <location>
        <begin position="1"/>
        <end position="462"/>
    </location>
</feature>
<feature type="active site" description="Charge relay system" evidence="1">
    <location>
        <position position="81"/>
    </location>
</feature>
<feature type="active site" description="Charge relay system" evidence="1">
    <location>
        <position position="155"/>
    </location>
</feature>
<feature type="active site" description="Acyl-ester intermediate" evidence="1">
    <location>
        <position position="179"/>
    </location>
</feature>
<name>AMIB2_MYCTO</name>
<comment type="catalytic activity">
    <reaction>
        <text>a monocarboxylic acid amide + H2O = a monocarboxylate + NH4(+)</text>
        <dbReference type="Rhea" id="RHEA:12020"/>
        <dbReference type="ChEBI" id="CHEBI:15377"/>
        <dbReference type="ChEBI" id="CHEBI:28938"/>
        <dbReference type="ChEBI" id="CHEBI:35757"/>
        <dbReference type="ChEBI" id="CHEBI:83628"/>
        <dbReference type="EC" id="3.5.1.4"/>
    </reaction>
</comment>
<comment type="similarity">
    <text evidence="2">Belongs to the amidase family.</text>
</comment>
<organism>
    <name type="scientific">Mycobacterium tuberculosis (strain CDC 1551 / Oshkosh)</name>
    <dbReference type="NCBI Taxonomy" id="83331"/>
    <lineage>
        <taxon>Bacteria</taxon>
        <taxon>Bacillati</taxon>
        <taxon>Actinomycetota</taxon>
        <taxon>Actinomycetes</taxon>
        <taxon>Mycobacteriales</taxon>
        <taxon>Mycobacteriaceae</taxon>
        <taxon>Mycobacterium</taxon>
        <taxon>Mycobacterium tuberculosis complex</taxon>
    </lineage>
</organism>
<keyword id="KW-0378">Hydrolase</keyword>
<keyword id="KW-1185">Reference proteome</keyword>
<reference key="1">
    <citation type="journal article" date="2002" name="J. Bacteriol.">
        <title>Whole-genome comparison of Mycobacterium tuberculosis clinical and laboratory strains.</title>
        <authorList>
            <person name="Fleischmann R.D."/>
            <person name="Alland D."/>
            <person name="Eisen J.A."/>
            <person name="Carpenter L."/>
            <person name="White O."/>
            <person name="Peterson J.D."/>
            <person name="DeBoy R.T."/>
            <person name="Dodson R.J."/>
            <person name="Gwinn M.L."/>
            <person name="Haft D.H."/>
            <person name="Hickey E.K."/>
            <person name="Kolonay J.F."/>
            <person name="Nelson W.C."/>
            <person name="Umayam L.A."/>
            <person name="Ermolaeva M.D."/>
            <person name="Salzberg S.L."/>
            <person name="Delcher A."/>
            <person name="Utterback T.R."/>
            <person name="Weidman J.F."/>
            <person name="Khouri H.M."/>
            <person name="Gill J."/>
            <person name="Mikula A."/>
            <person name="Bishai W."/>
            <person name="Jacobs W.R. Jr."/>
            <person name="Venter J.C."/>
            <person name="Fraser C.M."/>
        </authorList>
    </citation>
    <scope>NUCLEOTIDE SEQUENCE [LARGE SCALE GENOMIC DNA]</scope>
    <source>
        <strain>CDC 1551 / Oshkosh</strain>
    </source>
</reference>
<accession>P9WQ96</accession>
<accession>L0T8V5</accession>
<accession>P63492</accession>
<accession>Q11056</accession>